<organism>
    <name type="scientific">Mus musculus</name>
    <name type="common">Mouse</name>
    <dbReference type="NCBI Taxonomy" id="10090"/>
    <lineage>
        <taxon>Eukaryota</taxon>
        <taxon>Metazoa</taxon>
        <taxon>Chordata</taxon>
        <taxon>Craniata</taxon>
        <taxon>Vertebrata</taxon>
        <taxon>Euteleostomi</taxon>
        <taxon>Mammalia</taxon>
        <taxon>Eutheria</taxon>
        <taxon>Euarchontoglires</taxon>
        <taxon>Glires</taxon>
        <taxon>Rodentia</taxon>
        <taxon>Myomorpha</taxon>
        <taxon>Muroidea</taxon>
        <taxon>Muridae</taxon>
        <taxon>Murinae</taxon>
        <taxon>Mus</taxon>
        <taxon>Mus</taxon>
    </lineage>
</organism>
<protein>
    <recommendedName>
        <fullName evidence="7">ATP-binding cassette sub-family A member 9</fullName>
        <ecNumber evidence="1">7.6.2.-</ecNumber>
    </recommendedName>
</protein>
<reference key="1">
    <citation type="journal article" date="2003" name="Mamm. Genome">
        <title>Evolutionary analysis of a cluster of ATP-binding cassette (ABC) genes.</title>
        <authorList>
            <person name="Annilo T."/>
            <person name="Chen Z.-Q."/>
            <person name="Shulenin S."/>
            <person name="Dean M."/>
        </authorList>
    </citation>
    <scope>NUCLEOTIDE SEQUENCE [MRNA]</scope>
    <scope>TISSUE SPECIFICITY</scope>
    <source>
        <strain>BALB/cJ</strain>
        <tissue>Liver</tissue>
    </source>
</reference>
<reference key="2">
    <citation type="journal article" date="2009" name="PLoS Biol.">
        <title>Lineage-specific biology revealed by a finished genome assembly of the mouse.</title>
        <authorList>
            <person name="Church D.M."/>
            <person name="Goodstadt L."/>
            <person name="Hillier L.W."/>
            <person name="Zody M.C."/>
            <person name="Goldstein S."/>
            <person name="She X."/>
            <person name="Bult C.J."/>
            <person name="Agarwala R."/>
            <person name="Cherry J.L."/>
            <person name="DiCuccio M."/>
            <person name="Hlavina W."/>
            <person name="Kapustin Y."/>
            <person name="Meric P."/>
            <person name="Maglott D."/>
            <person name="Birtle Z."/>
            <person name="Marques A.C."/>
            <person name="Graves T."/>
            <person name="Zhou S."/>
            <person name="Teague B."/>
            <person name="Potamousis K."/>
            <person name="Churas C."/>
            <person name="Place M."/>
            <person name="Herschleb J."/>
            <person name="Runnheim R."/>
            <person name="Forrest D."/>
            <person name="Amos-Landgraf J."/>
            <person name="Schwartz D.C."/>
            <person name="Cheng Z."/>
            <person name="Lindblad-Toh K."/>
            <person name="Eichler E.E."/>
            <person name="Ponting C.P."/>
        </authorList>
    </citation>
    <scope>NUCLEOTIDE SEQUENCE [LARGE SCALE GENOMIC DNA]</scope>
    <source>
        <strain>C57BL/6J</strain>
    </source>
</reference>
<reference key="3">
    <citation type="submission" date="2005-07" db="EMBL/GenBank/DDBJ databases">
        <authorList>
            <person name="Mural R.J."/>
            <person name="Adams M.D."/>
            <person name="Myers E.W."/>
            <person name="Smith H.O."/>
            <person name="Venter J.C."/>
        </authorList>
    </citation>
    <scope>NUCLEOTIDE SEQUENCE [LARGE SCALE GENOMIC DNA]</scope>
</reference>
<reference key="4">
    <citation type="journal article" date="2005" name="Science">
        <title>The transcriptional landscape of the mammalian genome.</title>
        <authorList>
            <person name="Carninci P."/>
            <person name="Kasukawa T."/>
            <person name="Katayama S."/>
            <person name="Gough J."/>
            <person name="Frith M.C."/>
            <person name="Maeda N."/>
            <person name="Oyama R."/>
            <person name="Ravasi T."/>
            <person name="Lenhard B."/>
            <person name="Wells C."/>
            <person name="Kodzius R."/>
            <person name="Shimokawa K."/>
            <person name="Bajic V.B."/>
            <person name="Brenner S.E."/>
            <person name="Batalov S."/>
            <person name="Forrest A.R."/>
            <person name="Zavolan M."/>
            <person name="Davis M.J."/>
            <person name="Wilming L.G."/>
            <person name="Aidinis V."/>
            <person name="Allen J.E."/>
            <person name="Ambesi-Impiombato A."/>
            <person name="Apweiler R."/>
            <person name="Aturaliya R.N."/>
            <person name="Bailey T.L."/>
            <person name="Bansal M."/>
            <person name="Baxter L."/>
            <person name="Beisel K.W."/>
            <person name="Bersano T."/>
            <person name="Bono H."/>
            <person name="Chalk A.M."/>
            <person name="Chiu K.P."/>
            <person name="Choudhary V."/>
            <person name="Christoffels A."/>
            <person name="Clutterbuck D.R."/>
            <person name="Crowe M.L."/>
            <person name="Dalla E."/>
            <person name="Dalrymple B.P."/>
            <person name="de Bono B."/>
            <person name="Della Gatta G."/>
            <person name="di Bernardo D."/>
            <person name="Down T."/>
            <person name="Engstrom P."/>
            <person name="Fagiolini M."/>
            <person name="Faulkner G."/>
            <person name="Fletcher C.F."/>
            <person name="Fukushima T."/>
            <person name="Furuno M."/>
            <person name="Futaki S."/>
            <person name="Gariboldi M."/>
            <person name="Georgii-Hemming P."/>
            <person name="Gingeras T.R."/>
            <person name="Gojobori T."/>
            <person name="Green R.E."/>
            <person name="Gustincich S."/>
            <person name="Harbers M."/>
            <person name="Hayashi Y."/>
            <person name="Hensch T.K."/>
            <person name="Hirokawa N."/>
            <person name="Hill D."/>
            <person name="Huminiecki L."/>
            <person name="Iacono M."/>
            <person name="Ikeo K."/>
            <person name="Iwama A."/>
            <person name="Ishikawa T."/>
            <person name="Jakt M."/>
            <person name="Kanapin A."/>
            <person name="Katoh M."/>
            <person name="Kawasawa Y."/>
            <person name="Kelso J."/>
            <person name="Kitamura H."/>
            <person name="Kitano H."/>
            <person name="Kollias G."/>
            <person name="Krishnan S.P."/>
            <person name="Kruger A."/>
            <person name="Kummerfeld S.K."/>
            <person name="Kurochkin I.V."/>
            <person name="Lareau L.F."/>
            <person name="Lazarevic D."/>
            <person name="Lipovich L."/>
            <person name="Liu J."/>
            <person name="Liuni S."/>
            <person name="McWilliam S."/>
            <person name="Madan Babu M."/>
            <person name="Madera M."/>
            <person name="Marchionni L."/>
            <person name="Matsuda H."/>
            <person name="Matsuzawa S."/>
            <person name="Miki H."/>
            <person name="Mignone F."/>
            <person name="Miyake S."/>
            <person name="Morris K."/>
            <person name="Mottagui-Tabar S."/>
            <person name="Mulder N."/>
            <person name="Nakano N."/>
            <person name="Nakauchi H."/>
            <person name="Ng P."/>
            <person name="Nilsson R."/>
            <person name="Nishiguchi S."/>
            <person name="Nishikawa S."/>
            <person name="Nori F."/>
            <person name="Ohara O."/>
            <person name="Okazaki Y."/>
            <person name="Orlando V."/>
            <person name="Pang K.C."/>
            <person name="Pavan W.J."/>
            <person name="Pavesi G."/>
            <person name="Pesole G."/>
            <person name="Petrovsky N."/>
            <person name="Piazza S."/>
            <person name="Reed J."/>
            <person name="Reid J.F."/>
            <person name="Ring B.Z."/>
            <person name="Ringwald M."/>
            <person name="Rost B."/>
            <person name="Ruan Y."/>
            <person name="Salzberg S.L."/>
            <person name="Sandelin A."/>
            <person name="Schneider C."/>
            <person name="Schoenbach C."/>
            <person name="Sekiguchi K."/>
            <person name="Semple C.A."/>
            <person name="Seno S."/>
            <person name="Sessa L."/>
            <person name="Sheng Y."/>
            <person name="Shibata Y."/>
            <person name="Shimada H."/>
            <person name="Shimada K."/>
            <person name="Silva D."/>
            <person name="Sinclair B."/>
            <person name="Sperling S."/>
            <person name="Stupka E."/>
            <person name="Sugiura K."/>
            <person name="Sultana R."/>
            <person name="Takenaka Y."/>
            <person name="Taki K."/>
            <person name="Tammoja K."/>
            <person name="Tan S.L."/>
            <person name="Tang S."/>
            <person name="Taylor M.S."/>
            <person name="Tegner J."/>
            <person name="Teichmann S.A."/>
            <person name="Ueda H.R."/>
            <person name="van Nimwegen E."/>
            <person name="Verardo R."/>
            <person name="Wei C.L."/>
            <person name="Yagi K."/>
            <person name="Yamanishi H."/>
            <person name="Zabarovsky E."/>
            <person name="Zhu S."/>
            <person name="Zimmer A."/>
            <person name="Hide W."/>
            <person name="Bult C."/>
            <person name="Grimmond S.M."/>
            <person name="Teasdale R.D."/>
            <person name="Liu E.T."/>
            <person name="Brusic V."/>
            <person name="Quackenbush J."/>
            <person name="Wahlestedt C."/>
            <person name="Mattick J.S."/>
            <person name="Hume D.A."/>
            <person name="Kai C."/>
            <person name="Sasaki D."/>
            <person name="Tomaru Y."/>
            <person name="Fukuda S."/>
            <person name="Kanamori-Katayama M."/>
            <person name="Suzuki M."/>
            <person name="Aoki J."/>
            <person name="Arakawa T."/>
            <person name="Iida J."/>
            <person name="Imamura K."/>
            <person name="Itoh M."/>
            <person name="Kato T."/>
            <person name="Kawaji H."/>
            <person name="Kawagashira N."/>
            <person name="Kawashima T."/>
            <person name="Kojima M."/>
            <person name="Kondo S."/>
            <person name="Konno H."/>
            <person name="Nakano K."/>
            <person name="Ninomiya N."/>
            <person name="Nishio T."/>
            <person name="Okada M."/>
            <person name="Plessy C."/>
            <person name="Shibata K."/>
            <person name="Shiraki T."/>
            <person name="Suzuki S."/>
            <person name="Tagami M."/>
            <person name="Waki K."/>
            <person name="Watahiki A."/>
            <person name="Okamura-Oho Y."/>
            <person name="Suzuki H."/>
            <person name="Kawai J."/>
            <person name="Hayashizaki Y."/>
        </authorList>
    </citation>
    <scope>NUCLEOTIDE SEQUENCE [LARGE SCALE MRNA] OF 654-1623</scope>
    <source>
        <strain>C57BL/6J</strain>
        <tissue>Head</tissue>
    </source>
</reference>
<reference key="5">
    <citation type="journal article" date="2005" name="Clin. Exp. Pharmacol. Physiol.">
        <title>Acute digoxin loading reduces ABCA8A mRNA expression in the mouse liver.</title>
        <authorList>
            <person name="Wakaumi M."/>
            <person name="Ishibashi K."/>
            <person name="Ando H."/>
            <person name="Kasanuki H."/>
            <person name="Tsuruoka S."/>
        </authorList>
    </citation>
    <scope>INDUCTION</scope>
</reference>
<reference key="6">
    <citation type="journal article" date="2010" name="Cell">
        <title>A tissue-specific atlas of mouse protein phosphorylation and expression.</title>
        <authorList>
            <person name="Huttlin E.L."/>
            <person name="Jedrychowski M.P."/>
            <person name="Elias J.E."/>
            <person name="Goswami T."/>
            <person name="Rad R."/>
            <person name="Beausoleil S.A."/>
            <person name="Villen J."/>
            <person name="Haas W."/>
            <person name="Sowa M.E."/>
            <person name="Gygi S.P."/>
        </authorList>
    </citation>
    <scope>IDENTIFICATION BY MASS SPECTROMETRY [LARGE SCALE ANALYSIS]</scope>
    <source>
        <tissue>Brown adipose tissue</tissue>
        <tissue>Heart</tissue>
        <tissue>Kidney</tissue>
        <tissue>Lung</tissue>
        <tissue>Pancreas</tissue>
        <tissue>Spleen</tissue>
    </source>
</reference>
<reference key="7">
    <citation type="journal article" date="2018" name="Anat. Sci. Int.">
        <title>Gene expression of A6-like subgroup of ATP-binding cassette transporters in mouse brain parenchyma and microvessels.</title>
        <authorList>
            <person name="Tachikawa M."/>
            <person name="Toki H."/>
            <person name="Watanabe M."/>
            <person name="Tomi M."/>
            <person name="Hosoya K.I."/>
            <person name="Terasaki T."/>
        </authorList>
    </citation>
    <scope>TISSUE SPECIFICITY</scope>
    <scope>DEVELOPMENTAL STAGE</scope>
</reference>
<evidence type="ECO:0000250" key="1">
    <source>
        <dbReference type="UniProtKB" id="Q8IUA7"/>
    </source>
</evidence>
<evidence type="ECO:0000255" key="2"/>
<evidence type="ECO:0000255" key="3">
    <source>
        <dbReference type="PROSITE-ProRule" id="PRU00434"/>
    </source>
</evidence>
<evidence type="ECO:0000269" key="4">
    <source>
    </source>
</evidence>
<evidence type="ECO:0000269" key="5">
    <source>
    </source>
</evidence>
<evidence type="ECO:0000269" key="6">
    <source>
    </source>
</evidence>
<evidence type="ECO:0000305" key="7"/>
<accession>Q8K449</accession>
<accession>A2A6R5</accession>
<accession>Q8C114</accession>
<proteinExistence type="evidence at protein level"/>
<sequence length="1623" mass="183114">MRKRHLRLGQQMWALLCKNWLRKFRMRRETLLEWLFSLLLILFVYQLSSNLHQVHDAPEMSVVDLGRVDNFNDSNYMMVFAPESEATHEIMNKVASAPFMKGRTIVACPDEKSMNELDLNYSIDAVRVIFKDTFSYHLKFSWGQRIPKTKEHKDHSAPCEPLNNKMICENSAFWEKGFVAFQAAINAGIIEMITNHSVMEELMSVIGSNMKMPPFIAQGGVATDFFIFFCVISFSSLIYYLSVNITQERQYMTTLMAMMGLRESAFWLSWSLMYAGFILVVAVLMSLIVKSAQVVVLTGFMVVFLLFLFYGLSLITLSFLMSVLIKKPFLTGLAIFILTVFWGSLGFTALYKHLPAFVEWTLCFLSPFAFTTGMAQLIHLDYDVNSNVNLNSPNNSYLIMATLFMLVLDALLYLVLALYFDKITLSKYGHQRSPLFFLKSSYWFKRRGASHVVLENEIDSDPSLNDSLEPVSPEFQGKEAIRIKNLKKEYSGKHGKVEALRGLGFDIYEGQITALLGHSGAGKTTLINTLSGLSPPTTGSVTIYNQTVSEMDDSDAVLTITGVCPQSNVQFGFLTVRENLRLFAKIKGILPHEVEQEVQQVLQDLEMENIQDILAQNLSGGQKRKLTLGIAILGDPQVLLLDEPTAGLDPLSRHRIWNLLKERRAGRVIVFSTQFMDEADILADRKVFISNGRLKCAGSSLFLKKKWGIGYHLSLHLNEACDPEGITSLVKKHISDARLTTQSEERLVYILPLERTNKFPDLYRDLDRCSNQGIEDYGVSMTTLNEVFLKLEGKSMADESDVGICGRLQSDGARDMESLVELEQVLSLDSSGSSVSGMALWRQQLCAVAKVRFFKLKNERKSLMTVLLLFGISFVPQLLEHLVYKVYHKSYSWGLSPSMYFLSPGQPPQDPLTHLLVINRTGSSIDNFVHALRQQGIALDLDALGTRNGTEEALYNGAITVLGEEKALRFSVACNAKRLNCFPVLMDIISNGLLGIFNSSERIQTDRSTVFEEHMLYEYGFMSNAFFWIPVAASLTPYIAMGSISDHKKKVLSQLWTSGLYPSAYWCGQALVDIPIYFLILFLMQIMDSVFSSEEFISVMESLLIQIPCSIGYASSLIFMTYVISFIFRNGRKNSGIWSFFFLIVTIFFIIATDINEYGFLELLICTFLVPPFTLIGSLLIFSEVSYDSVDYLGTSESQLVFLALLIPYLHFLLFFFILRCLERYLRKKSLRVDPVFRISPRSCPAVPNPEEPGEEDEDVQMERVRTTGAMATLQTDEKPVIIASCLRKEYIGRTKRCFSKMKKKIATRNISFCVKKGEVLGLLGHNGAGKSTTISMITGDTIPTAGQVFLKGSGGGAALGFLGYCPQENVLWPNLTVKEHLELYAAVKGLKKKDAVVTITRLVNALKLQDHLKALVRTLSEGVKRKLCFVLSILGNPPVVLLDEPSTGMDPEGQQQMWQAIRATFTNTERGALLTTHYMAEAEAVCDRVAIMVSGRLRCIGSIQHLKSKFGKDYLLEMKVKTPSQVEPLNTEIMRLFPQAARQERYSSLMVYKLPVEDVRPLSEAFFKLERLKENFDLEEYSLSQSTLEQVFLELSKEQELDDFGEEANSSVKWKLLPQEEL</sequence>
<comment type="function">
    <text evidence="1">Transporter that may play a role in monocyte differentiation and lipid transport and homeostasis.</text>
</comment>
<comment type="subcellular location">
    <subcellularLocation>
        <location evidence="7">Membrane</location>
        <topology evidence="7">Multi-pass membrane protein</topology>
    </subcellularLocation>
</comment>
<comment type="tissue specificity">
    <text evidence="4 6">Highly expressed in heart and to lower extent in kidney, brain and spleen (PubMed:12532264). Weakly expressed in developing and adult brains (PubMed:29520568). Weakly expressed in the cerebellar granular layer at P14 and P21 (PubMed:29520568).</text>
</comment>
<comment type="developmental stage">
    <text evidence="6">Detected along the outer surface of the brain or along the fissure of cerebellar lobules at 13 dpc to P21.</text>
</comment>
<comment type="induction">
    <text evidence="5">Down-regulated by digoxin.</text>
</comment>
<comment type="similarity">
    <text evidence="7">Belongs to the ABC transporter superfamily. ABCA family.</text>
</comment>
<keyword id="KW-0067">ATP-binding</keyword>
<keyword id="KW-0325">Glycoprotein</keyword>
<keyword id="KW-0472">Membrane</keyword>
<keyword id="KW-0547">Nucleotide-binding</keyword>
<keyword id="KW-1185">Reference proteome</keyword>
<keyword id="KW-0677">Repeat</keyword>
<keyword id="KW-1278">Translocase</keyword>
<keyword id="KW-0812">Transmembrane</keyword>
<keyword id="KW-1133">Transmembrane helix</keyword>
<keyword id="KW-0813">Transport</keyword>
<name>ABCA9_MOUSE</name>
<feature type="chain" id="PRO_0000250681" description="ATP-binding cassette sub-family A member 9">
    <location>
        <begin position="1"/>
        <end position="1623"/>
    </location>
</feature>
<feature type="transmembrane region" description="Helical" evidence="2">
    <location>
        <begin position="31"/>
        <end position="51"/>
    </location>
</feature>
<feature type="transmembrane region" description="Helical" evidence="2">
    <location>
        <begin position="225"/>
        <end position="245"/>
    </location>
</feature>
<feature type="transmembrane region" description="Helical" evidence="2">
    <location>
        <begin position="265"/>
        <end position="285"/>
    </location>
</feature>
<feature type="transmembrane region" description="Helical" evidence="2">
    <location>
        <begin position="295"/>
        <end position="315"/>
    </location>
</feature>
<feature type="transmembrane region" description="Helical" evidence="2">
    <location>
        <begin position="329"/>
        <end position="349"/>
    </location>
</feature>
<feature type="transmembrane region" description="Helical" evidence="2">
    <location>
        <begin position="354"/>
        <end position="374"/>
    </location>
</feature>
<feature type="transmembrane region" description="Helical" evidence="2">
    <location>
        <begin position="398"/>
        <end position="418"/>
    </location>
</feature>
<feature type="transmembrane region" description="Helical" evidence="2">
    <location>
        <begin position="863"/>
        <end position="883"/>
    </location>
</feature>
<feature type="transmembrane region" description="Helical" evidence="2">
    <location>
        <begin position="1025"/>
        <end position="1045"/>
    </location>
</feature>
<feature type="transmembrane region" description="Helical" evidence="2">
    <location>
        <begin position="1071"/>
        <end position="1091"/>
    </location>
</feature>
<feature type="transmembrane region" description="Helical" evidence="2">
    <location>
        <begin position="1107"/>
        <end position="1127"/>
    </location>
</feature>
<feature type="transmembrane region" description="Helical" evidence="2">
    <location>
        <begin position="1135"/>
        <end position="1155"/>
    </location>
</feature>
<feature type="transmembrane region" description="Helical" evidence="2">
    <location>
        <begin position="1163"/>
        <end position="1183"/>
    </location>
</feature>
<feature type="transmembrane region" description="Helical" evidence="2">
    <location>
        <begin position="1199"/>
        <end position="1219"/>
    </location>
</feature>
<feature type="domain" description="ABC transporter 1" evidence="3">
    <location>
        <begin position="481"/>
        <end position="716"/>
    </location>
</feature>
<feature type="domain" description="ABC transporter 2" evidence="3">
    <location>
        <begin position="1287"/>
        <end position="1520"/>
    </location>
</feature>
<feature type="binding site" evidence="3">
    <location>
        <begin position="517"/>
        <end position="524"/>
    </location>
    <ligand>
        <name>ATP</name>
        <dbReference type="ChEBI" id="CHEBI:30616"/>
        <label>1</label>
    </ligand>
</feature>
<feature type="binding site" evidence="3">
    <location>
        <begin position="1325"/>
        <end position="1332"/>
    </location>
    <ligand>
        <name>ATP</name>
        <dbReference type="ChEBI" id="CHEBI:30616"/>
        <label>2</label>
    </ligand>
</feature>
<feature type="glycosylation site" description="N-linked (GlcNAc...) asparagine" evidence="2">
    <location>
        <position position="120"/>
    </location>
</feature>
<feature type="sequence conflict" description="In Ref. 1; AAM90894." evidence="7" ref="1">
    <original>A</original>
    <variation>T</variation>
    <location>
        <position position="57"/>
    </location>
</feature>
<gene>
    <name type="primary">Abca9</name>
</gene>
<dbReference type="EC" id="7.6.2.-" evidence="1"/>
<dbReference type="EMBL" id="AF491299">
    <property type="protein sequence ID" value="AAM90894.1"/>
    <property type="molecule type" value="mRNA"/>
</dbReference>
<dbReference type="EMBL" id="AL603792">
    <property type="status" value="NOT_ANNOTATED_CDS"/>
    <property type="molecule type" value="Genomic_DNA"/>
</dbReference>
<dbReference type="EMBL" id="CH466558">
    <property type="protein sequence ID" value="EDL34378.1"/>
    <property type="molecule type" value="Genomic_DNA"/>
</dbReference>
<dbReference type="EMBL" id="AK029256">
    <property type="protein sequence ID" value="BAC26358.1"/>
    <property type="molecule type" value="mRNA"/>
</dbReference>
<dbReference type="CCDS" id="CCDS25589.1"/>
<dbReference type="RefSeq" id="NP_671753.2">
    <property type="nucleotide sequence ID" value="NM_147220.2"/>
</dbReference>
<dbReference type="RefSeq" id="XP_017169975.1">
    <property type="nucleotide sequence ID" value="XM_017314486.3"/>
</dbReference>
<dbReference type="RefSeq" id="XP_036012495.1">
    <property type="nucleotide sequence ID" value="XM_036156602.1"/>
</dbReference>
<dbReference type="SMR" id="Q8K449"/>
<dbReference type="BioGRID" id="229876">
    <property type="interactions" value="2"/>
</dbReference>
<dbReference type="FunCoup" id="Q8K449">
    <property type="interactions" value="526"/>
</dbReference>
<dbReference type="STRING" id="10090.ENSMUSP00000036338"/>
<dbReference type="GlyCosmos" id="Q8K449">
    <property type="glycosylation" value="1 site, No reported glycans"/>
</dbReference>
<dbReference type="GlyGen" id="Q8K449">
    <property type="glycosylation" value="3 sites, 3 N-linked glycans (3 sites)"/>
</dbReference>
<dbReference type="iPTMnet" id="Q8K449"/>
<dbReference type="PhosphoSitePlus" id="Q8K449"/>
<dbReference type="jPOST" id="Q8K449"/>
<dbReference type="PaxDb" id="10090-ENSMUSP00000036338"/>
<dbReference type="PeptideAtlas" id="Q8K449"/>
<dbReference type="ProteomicsDB" id="286041"/>
<dbReference type="Antibodypedia" id="31822">
    <property type="antibodies" value="170 antibodies from 30 providers"/>
</dbReference>
<dbReference type="DNASU" id="217262"/>
<dbReference type="Ensembl" id="ENSMUST00000044850.4">
    <property type="protein sequence ID" value="ENSMUSP00000036338.4"/>
    <property type="gene ID" value="ENSMUSG00000041797.8"/>
</dbReference>
<dbReference type="GeneID" id="217262"/>
<dbReference type="KEGG" id="mmu:217262"/>
<dbReference type="UCSC" id="uc007mdh.1">
    <property type="organism name" value="mouse"/>
</dbReference>
<dbReference type="AGR" id="MGI:2386796"/>
<dbReference type="CTD" id="10350"/>
<dbReference type="MGI" id="MGI:2386796">
    <property type="gene designation" value="Abca9"/>
</dbReference>
<dbReference type="VEuPathDB" id="HostDB:ENSMUSG00000041797"/>
<dbReference type="eggNOG" id="KOG0059">
    <property type="taxonomic scope" value="Eukaryota"/>
</dbReference>
<dbReference type="GeneTree" id="ENSGT00940000162444"/>
<dbReference type="HOGENOM" id="CLU_000604_19_1_1"/>
<dbReference type="InParanoid" id="Q8K449"/>
<dbReference type="OMA" id="TYFEEHT"/>
<dbReference type="OrthoDB" id="8061355at2759"/>
<dbReference type="PhylomeDB" id="Q8K449"/>
<dbReference type="TreeFam" id="TF105192"/>
<dbReference type="Reactome" id="R-MMU-1369062">
    <property type="pathway name" value="ABC transporters in lipid homeostasis"/>
</dbReference>
<dbReference type="BioGRID-ORCS" id="217262">
    <property type="hits" value="1 hit in 77 CRISPR screens"/>
</dbReference>
<dbReference type="ChiTaRS" id="Abca9">
    <property type="organism name" value="mouse"/>
</dbReference>
<dbReference type="PRO" id="PR:Q8K449"/>
<dbReference type="Proteomes" id="UP000000589">
    <property type="component" value="Chromosome 11"/>
</dbReference>
<dbReference type="RNAct" id="Q8K449">
    <property type="molecule type" value="protein"/>
</dbReference>
<dbReference type="Bgee" id="ENSMUSG00000041797">
    <property type="expression patterns" value="Expressed in sciatic nerve and 191 other cell types or tissues"/>
</dbReference>
<dbReference type="GO" id="GO:0016020">
    <property type="term" value="C:membrane"/>
    <property type="evidence" value="ECO:0007669"/>
    <property type="project" value="UniProtKB-SubCell"/>
</dbReference>
<dbReference type="GO" id="GO:0005739">
    <property type="term" value="C:mitochondrion"/>
    <property type="evidence" value="ECO:0007005"/>
    <property type="project" value="MGI"/>
</dbReference>
<dbReference type="GO" id="GO:0140359">
    <property type="term" value="F:ABC-type transporter activity"/>
    <property type="evidence" value="ECO:0007669"/>
    <property type="project" value="InterPro"/>
</dbReference>
<dbReference type="GO" id="GO:0005524">
    <property type="term" value="F:ATP binding"/>
    <property type="evidence" value="ECO:0007669"/>
    <property type="project" value="UniProtKB-KW"/>
</dbReference>
<dbReference type="GO" id="GO:0016887">
    <property type="term" value="F:ATP hydrolysis activity"/>
    <property type="evidence" value="ECO:0007669"/>
    <property type="project" value="InterPro"/>
</dbReference>
<dbReference type="CDD" id="cd03263">
    <property type="entry name" value="ABC_subfamily_A"/>
    <property type="match status" value="2"/>
</dbReference>
<dbReference type="FunFam" id="3.40.50.300:FF:000335">
    <property type="entry name" value="ATP binding cassette subfamily A member 5"/>
    <property type="match status" value="1"/>
</dbReference>
<dbReference type="FunFam" id="3.40.50.300:FF:000436">
    <property type="entry name" value="ATP binding cassette subfamily A member 9"/>
    <property type="match status" value="1"/>
</dbReference>
<dbReference type="Gene3D" id="3.40.50.300">
    <property type="entry name" value="P-loop containing nucleotide triphosphate hydrolases"/>
    <property type="match status" value="2"/>
</dbReference>
<dbReference type="InterPro" id="IPR003593">
    <property type="entry name" value="AAA+_ATPase"/>
</dbReference>
<dbReference type="InterPro" id="IPR013525">
    <property type="entry name" value="ABC2_TM"/>
</dbReference>
<dbReference type="InterPro" id="IPR003439">
    <property type="entry name" value="ABC_transporter-like_ATP-bd"/>
</dbReference>
<dbReference type="InterPro" id="IPR017871">
    <property type="entry name" value="ABC_transporter-like_CS"/>
</dbReference>
<dbReference type="InterPro" id="IPR026082">
    <property type="entry name" value="ABCA"/>
</dbReference>
<dbReference type="InterPro" id="IPR027417">
    <property type="entry name" value="P-loop_NTPase"/>
</dbReference>
<dbReference type="InterPro" id="IPR056264">
    <property type="entry name" value="R2_ABCA1-4-like"/>
</dbReference>
<dbReference type="PANTHER" id="PTHR19229:SF274">
    <property type="entry name" value="ABC-TYPE ORGANIC ANION TRANSPORTER ABCA8"/>
    <property type="match status" value="1"/>
</dbReference>
<dbReference type="PANTHER" id="PTHR19229">
    <property type="entry name" value="ATP-BINDING CASSETTE TRANSPORTER SUBFAMILY A ABCA"/>
    <property type="match status" value="1"/>
</dbReference>
<dbReference type="Pfam" id="PF12698">
    <property type="entry name" value="ABC2_membrane_3"/>
    <property type="match status" value="2"/>
</dbReference>
<dbReference type="Pfam" id="PF00005">
    <property type="entry name" value="ABC_tran"/>
    <property type="match status" value="2"/>
</dbReference>
<dbReference type="Pfam" id="PF23321">
    <property type="entry name" value="R1_ABCA1"/>
    <property type="match status" value="1"/>
</dbReference>
<dbReference type="SMART" id="SM00382">
    <property type="entry name" value="AAA"/>
    <property type="match status" value="2"/>
</dbReference>
<dbReference type="SUPFAM" id="SSF52540">
    <property type="entry name" value="P-loop containing nucleoside triphosphate hydrolases"/>
    <property type="match status" value="2"/>
</dbReference>
<dbReference type="PROSITE" id="PS00211">
    <property type="entry name" value="ABC_TRANSPORTER_1"/>
    <property type="match status" value="1"/>
</dbReference>
<dbReference type="PROSITE" id="PS50893">
    <property type="entry name" value="ABC_TRANSPORTER_2"/>
    <property type="match status" value="2"/>
</dbReference>